<evidence type="ECO:0000255" key="1">
    <source>
        <dbReference type="HAMAP-Rule" id="MF_01350"/>
    </source>
</evidence>
<accession>Q3ZXR7</accession>
<reference key="1">
    <citation type="journal article" date="2005" name="Nat. Biotechnol.">
        <title>Genome sequence of the chlorinated compound-respiring bacterium Dehalococcoides species strain CBDB1.</title>
        <authorList>
            <person name="Kube M."/>
            <person name="Beck A."/>
            <person name="Zinder S.H."/>
            <person name="Kuhl H."/>
            <person name="Reinhardt R."/>
            <person name="Adrian L."/>
        </authorList>
    </citation>
    <scope>NUCLEOTIDE SEQUENCE [LARGE SCALE GENOMIC DNA]</scope>
    <source>
        <strain>CBDB1</strain>
    </source>
</reference>
<gene>
    <name evidence="1" type="primary">nuoH</name>
    <name type="ordered locus">cbdbA879</name>
</gene>
<sequence length="353" mass="39202">MSDFWIHLLVYLVILFGFVIVSVLIFIWLERRLIGRFQLRPGPNRAGPFGLLQPIADAIKVLIKEDIIPSEADKGVFWLAPLVAFVPVMLMFAAIPFADGVMLVDLNIGILYILAVSSVTVIGIFMAGWSSNNKYSLLGAMRTIAQEVSYEIPLVLSILGVVMLTGSLSMNEIVKAQDVPFILLQPLGFFVYLSAAMAEVNRTPFDLLEAESEIIAGFHTEYSGMKFGLFYLMEYAEVLAVSAIATTLFLGGWQGPLLHPVFWFIAKILLVFMFIIWVRATLPRLRIDQVMAFGWKFLLPLSLANLVITAFEILIAPDINTAVLIGINIAVMFGLVLLFSRFYKLGGGRVSIK</sequence>
<name>NUOH_DEHMC</name>
<feature type="chain" id="PRO_0000240070" description="NADH-quinone oxidoreductase subunit H">
    <location>
        <begin position="1"/>
        <end position="353"/>
    </location>
</feature>
<feature type="transmembrane region" description="Helical" evidence="1">
    <location>
        <begin position="8"/>
        <end position="28"/>
    </location>
</feature>
<feature type="transmembrane region" description="Helical" evidence="1">
    <location>
        <begin position="75"/>
        <end position="95"/>
    </location>
</feature>
<feature type="transmembrane region" description="Helical" evidence="1">
    <location>
        <begin position="108"/>
        <end position="128"/>
    </location>
</feature>
<feature type="transmembrane region" description="Helical" evidence="1">
    <location>
        <begin position="148"/>
        <end position="168"/>
    </location>
</feature>
<feature type="transmembrane region" description="Helical" evidence="1">
    <location>
        <begin position="179"/>
        <end position="199"/>
    </location>
</feature>
<feature type="transmembrane region" description="Helical" evidence="1">
    <location>
        <begin position="229"/>
        <end position="249"/>
    </location>
</feature>
<feature type="transmembrane region" description="Helical" evidence="1">
    <location>
        <begin position="258"/>
        <end position="278"/>
    </location>
</feature>
<feature type="transmembrane region" description="Helical" evidence="1">
    <location>
        <begin position="297"/>
        <end position="317"/>
    </location>
</feature>
<feature type="transmembrane region" description="Helical" evidence="1">
    <location>
        <begin position="319"/>
        <end position="339"/>
    </location>
</feature>
<keyword id="KW-1003">Cell membrane</keyword>
<keyword id="KW-0472">Membrane</keyword>
<keyword id="KW-0520">NAD</keyword>
<keyword id="KW-0874">Quinone</keyword>
<keyword id="KW-1278">Translocase</keyword>
<keyword id="KW-0812">Transmembrane</keyword>
<keyword id="KW-1133">Transmembrane helix</keyword>
<keyword id="KW-0830">Ubiquinone</keyword>
<comment type="function">
    <text evidence="1">NDH-1 shuttles electrons from NADH, via FMN and iron-sulfur (Fe-S) centers, to quinones in the respiratory chain. The immediate electron acceptor for the enzyme in this species is believed to be ubiquinone. Couples the redox reaction to proton translocation (for every two electrons transferred, four hydrogen ions are translocated across the cytoplasmic membrane), and thus conserves the redox energy in a proton gradient. This subunit may bind ubiquinone.</text>
</comment>
<comment type="catalytic activity">
    <reaction evidence="1">
        <text>a quinone + NADH + 5 H(+)(in) = a quinol + NAD(+) + 4 H(+)(out)</text>
        <dbReference type="Rhea" id="RHEA:57888"/>
        <dbReference type="ChEBI" id="CHEBI:15378"/>
        <dbReference type="ChEBI" id="CHEBI:24646"/>
        <dbReference type="ChEBI" id="CHEBI:57540"/>
        <dbReference type="ChEBI" id="CHEBI:57945"/>
        <dbReference type="ChEBI" id="CHEBI:132124"/>
    </reaction>
</comment>
<comment type="subunit">
    <text evidence="1">NDH-1 is composed of 14 different subunits. Subunits NuoA, H, J, K, L, M, N constitute the membrane sector of the complex.</text>
</comment>
<comment type="subcellular location">
    <subcellularLocation>
        <location evidence="1">Cell membrane</location>
        <topology evidence="1">Multi-pass membrane protein</topology>
    </subcellularLocation>
</comment>
<comment type="similarity">
    <text evidence="1">Belongs to the complex I subunit 1 family.</text>
</comment>
<proteinExistence type="inferred from homology"/>
<dbReference type="EC" id="7.1.1.-" evidence="1"/>
<dbReference type="EMBL" id="AJ965256">
    <property type="protein sequence ID" value="CAI83018.1"/>
    <property type="molecule type" value="Genomic_DNA"/>
</dbReference>
<dbReference type="RefSeq" id="WP_011309369.1">
    <property type="nucleotide sequence ID" value="NC_007356.1"/>
</dbReference>
<dbReference type="SMR" id="Q3ZXR7"/>
<dbReference type="KEGG" id="deh:cbdbA879"/>
<dbReference type="HOGENOM" id="CLU_015134_0_1_0"/>
<dbReference type="Proteomes" id="UP000000433">
    <property type="component" value="Chromosome"/>
</dbReference>
<dbReference type="GO" id="GO:0005886">
    <property type="term" value="C:plasma membrane"/>
    <property type="evidence" value="ECO:0007669"/>
    <property type="project" value="UniProtKB-SubCell"/>
</dbReference>
<dbReference type="GO" id="GO:0003954">
    <property type="term" value="F:NADH dehydrogenase activity"/>
    <property type="evidence" value="ECO:0007669"/>
    <property type="project" value="TreeGrafter"/>
</dbReference>
<dbReference type="GO" id="GO:0016655">
    <property type="term" value="F:oxidoreductase activity, acting on NAD(P)H, quinone or similar compound as acceptor"/>
    <property type="evidence" value="ECO:0007669"/>
    <property type="project" value="UniProtKB-UniRule"/>
</dbReference>
<dbReference type="GO" id="GO:0048038">
    <property type="term" value="F:quinone binding"/>
    <property type="evidence" value="ECO:0007669"/>
    <property type="project" value="UniProtKB-KW"/>
</dbReference>
<dbReference type="GO" id="GO:0009060">
    <property type="term" value="P:aerobic respiration"/>
    <property type="evidence" value="ECO:0007669"/>
    <property type="project" value="TreeGrafter"/>
</dbReference>
<dbReference type="HAMAP" id="MF_01350">
    <property type="entry name" value="NDH1_NuoH"/>
    <property type="match status" value="1"/>
</dbReference>
<dbReference type="InterPro" id="IPR001694">
    <property type="entry name" value="NADH_UbQ_OxRdtase_su1/FPO"/>
</dbReference>
<dbReference type="InterPro" id="IPR018086">
    <property type="entry name" value="NADH_UbQ_OxRdtase_su1_CS"/>
</dbReference>
<dbReference type="NCBIfam" id="NF004741">
    <property type="entry name" value="PRK06076.1-2"/>
    <property type="match status" value="1"/>
</dbReference>
<dbReference type="PANTHER" id="PTHR11432">
    <property type="entry name" value="NADH DEHYDROGENASE SUBUNIT 1"/>
    <property type="match status" value="1"/>
</dbReference>
<dbReference type="PANTHER" id="PTHR11432:SF3">
    <property type="entry name" value="NADH-UBIQUINONE OXIDOREDUCTASE CHAIN 1"/>
    <property type="match status" value="1"/>
</dbReference>
<dbReference type="Pfam" id="PF00146">
    <property type="entry name" value="NADHdh"/>
    <property type="match status" value="1"/>
</dbReference>
<dbReference type="PROSITE" id="PS00667">
    <property type="entry name" value="COMPLEX1_ND1_1"/>
    <property type="match status" value="1"/>
</dbReference>
<protein>
    <recommendedName>
        <fullName evidence="1">NADH-quinone oxidoreductase subunit H</fullName>
        <ecNumber evidence="1">7.1.1.-</ecNumber>
    </recommendedName>
    <alternativeName>
        <fullName evidence="1">NADH dehydrogenase I subunit H</fullName>
    </alternativeName>
    <alternativeName>
        <fullName evidence="1">NDH-1 subunit H</fullName>
    </alternativeName>
</protein>
<organism>
    <name type="scientific">Dehalococcoides mccartyi (strain CBDB1)</name>
    <dbReference type="NCBI Taxonomy" id="255470"/>
    <lineage>
        <taxon>Bacteria</taxon>
        <taxon>Bacillati</taxon>
        <taxon>Chloroflexota</taxon>
        <taxon>Dehalococcoidia</taxon>
        <taxon>Dehalococcoidales</taxon>
        <taxon>Dehalococcoidaceae</taxon>
        <taxon>Dehalococcoides</taxon>
    </lineage>
</organism>